<feature type="chain" id="PRO_0000444757" description="Vacuolar protein sorting-associated protein 8 homolog" evidence="8">
    <location>
        <begin position="1"/>
        <end position="1229"/>
    </location>
</feature>
<feature type="repeat" description="CHCR" evidence="3">
    <location>
        <begin position="901"/>
        <end position="1063"/>
    </location>
</feature>
<feature type="zinc finger region" description="RING-type; atypical" evidence="2">
    <location>
        <begin position="1148"/>
        <end position="1189"/>
    </location>
</feature>
<feature type="region of interest" description="Disordered" evidence="4">
    <location>
        <begin position="67"/>
        <end position="89"/>
    </location>
</feature>
<feature type="sequence conflict" description="In Ref. 3; ACS54286/ACY40032." evidence="8" ref="3">
    <original>V</original>
    <variation>L</variation>
    <location>
        <position position="460"/>
    </location>
</feature>
<feature type="sequence conflict" description="In Ref. 3; ACS54286/ACY40032." evidence="8" ref="3">
    <original>L</original>
    <variation>H</variation>
    <location>
        <position position="554"/>
    </location>
</feature>
<feature type="sequence conflict" description="In Ref. 3; ACS54286/ACY40032." evidence="8" ref="3">
    <original>D</original>
    <variation>E</variation>
    <location>
        <position position="646"/>
    </location>
</feature>
<feature type="sequence conflict" description="In Ref. 3; ACS54286/ACY40032." evidence="8" ref="3">
    <original>E</original>
    <variation>G</variation>
    <location>
        <position position="666"/>
    </location>
</feature>
<feature type="sequence conflict" description="In Ref. 3; ACS54286/ACY40032." evidence="8" ref="3">
    <original>S</original>
    <variation>C</variation>
    <location>
        <position position="857"/>
    </location>
</feature>
<feature type="sequence conflict" description="In Ref. 3; ACS54286/ACY40032." evidence="8" ref="3">
    <original>L</original>
    <variation>V</variation>
    <location>
        <position position="930"/>
    </location>
</feature>
<feature type="sequence conflict" description="In Ref. 3; ACS54286/ACY40032." evidence="8" ref="3">
    <original>S</original>
    <variation>A</variation>
    <location>
        <position position="960"/>
    </location>
</feature>
<gene>
    <name evidence="12" type="primary">Vps8</name>
    <name evidence="12" type="ORF">CG10144</name>
</gene>
<sequence>MSELKAPSLQSLLESERGSTDSLLAESLQLDFEDLDDAEFAIPPTDVLPTLEAVLSEFEADSDVASEFGMPVPHATPTPSIGEDSTIRTDGRGGGGSIMRYTLLHGISAQLSSAAERVNAGAASSCAVAAFIAIGTSHGHILNFDVTQTLRWAHQDKHGQGAVASLAFNADSTRLLAGFSRGLVAMLDTHTGDVLRELFDVITPNTGVLHVKWTSRSSLALCADAGGSVWSLSFTRKLGIRGCQSRCLFSGARGEVCAVEPLIMDSQGRHELDQYCIVALATLSKYFIVTVRPRLRVIKYHVLQGPPDCLPLLAWHLVLIQAADTSRSVDPVIVVGRGNQLFFHQLFVSNGRITLLYLRHVQLQGSLLSAHWLGPKCVASLDTAEILHLVDVRSSKELECMDMANAGLVYGSAQFKGLATGGNVSPAFALAGSNACYNSVVSRGTQLYVLGARSLHIIGVRTWSERISFLVKHHRWQEACQLALDGYIASVDRPRKRAQAKERIIMLFKEYIANSARAPEYCLGAIVNCLITVGELDLLWTQLWEKLHNSSTELFLQHISEHIEKETIHSVNPVISQALVDYWLEHSPAKLEQLILKLDWMCLDLNQVLKAVKKHRLFRAQIYLNTQALNDYTAALTELLPLVTPDETDLGNCLLVYVSSCLAGREYPSGEIPVELVHQVKHDVLRCLTSQHSKENAGDELPYPYLRALLKFDTRETLNVISLAFQEREFSNELGISHRKRIINLLLEIMSPENATWAEIGCLLNFIAQQISMQCLPRDRQLLERVLSHLAQEEIANESSRQHSERENAWHELLSSNCLAEISSDEEQLRLAEKAKCYCVVEYLLEKLERYDTILDSYIRNEARHETMFAYMERHVASPKRSIFRQLKRNLRELLTINAKETTRLLSLHYPEKINELLDNLRREENLLYLFLKCLNDRKSELEASQMELLLELYCKMESSSTVEEFLRSNSGYRLENAIAIAESHHLNRSVIYLYEKQESYAKAFELSMELLKSAAGEEAAKEAQTISALLARSVETLPAQELERCWFALLQYILPHQELQSITKSLLHEASQHIDLHNLVQLIMNTHNVSTSFGDIKDLLMGMLDSSRHKTEALRASAGALCQDLHLKFVKRYQHAHRGLWVTTTKCSMCRQRLYDHSQVLIFGGCGHGIHEQCMEESETQFEECPRCFTAIPDQSIGLPRPNKNLISISSSLEMGALQLKAPPRRFI</sequence>
<protein>
    <recommendedName>
        <fullName evidence="1">Vacuolar protein sorting-associated protein 8 homolog</fullName>
    </recommendedName>
    <alternativeName>
        <fullName evidence="12">Vacuolar protein sorting 8</fullName>
    </alternativeName>
</protein>
<organism evidence="13">
    <name type="scientific">Drosophila melanogaster</name>
    <name type="common">Fruit fly</name>
    <dbReference type="NCBI Taxonomy" id="7227"/>
    <lineage>
        <taxon>Eukaryota</taxon>
        <taxon>Metazoa</taxon>
        <taxon>Ecdysozoa</taxon>
        <taxon>Arthropoda</taxon>
        <taxon>Hexapoda</taxon>
        <taxon>Insecta</taxon>
        <taxon>Pterygota</taxon>
        <taxon>Neoptera</taxon>
        <taxon>Endopterygota</taxon>
        <taxon>Diptera</taxon>
        <taxon>Brachycera</taxon>
        <taxon>Muscomorpha</taxon>
        <taxon>Ephydroidea</taxon>
        <taxon>Drosophilidae</taxon>
        <taxon>Drosophila</taxon>
        <taxon>Sophophora</taxon>
    </lineage>
</organism>
<evidence type="ECO:0000250" key="1">
    <source>
        <dbReference type="UniProtKB" id="Q8N3P4"/>
    </source>
</evidence>
<evidence type="ECO:0000255" key="2">
    <source>
        <dbReference type="PROSITE-ProRule" id="PRU00175"/>
    </source>
</evidence>
<evidence type="ECO:0000255" key="3">
    <source>
        <dbReference type="PROSITE-ProRule" id="PRU01006"/>
    </source>
</evidence>
<evidence type="ECO:0000256" key="4">
    <source>
        <dbReference type="SAM" id="MobiDB-lite"/>
    </source>
</evidence>
<evidence type="ECO:0000269" key="5">
    <source>
    </source>
</evidence>
<evidence type="ECO:0000269" key="6">
    <source>
    </source>
</evidence>
<evidence type="ECO:0000303" key="7">
    <source>
    </source>
</evidence>
<evidence type="ECO:0000305" key="8"/>
<evidence type="ECO:0000312" key="9">
    <source>
        <dbReference type="EMBL" id="ACK77654.1"/>
    </source>
</evidence>
<evidence type="ECO:0000312" key="10">
    <source>
        <dbReference type="EMBL" id="ACS54286.1"/>
    </source>
</evidence>
<evidence type="ECO:0000312" key="11">
    <source>
        <dbReference type="EMBL" id="ACY40032.1"/>
    </source>
</evidence>
<evidence type="ECO:0000312" key="12">
    <source>
        <dbReference type="FlyBase" id="FBgn0035704"/>
    </source>
</evidence>
<evidence type="ECO:0000312" key="13">
    <source>
        <dbReference type="Proteomes" id="UP000000803"/>
    </source>
</evidence>
<reference evidence="13" key="1">
    <citation type="journal article" date="2000" name="Science">
        <title>The genome sequence of Drosophila melanogaster.</title>
        <authorList>
            <person name="Adams M.D."/>
            <person name="Celniker S.E."/>
            <person name="Holt R.A."/>
            <person name="Evans C.A."/>
            <person name="Gocayne J.D."/>
            <person name="Amanatides P.G."/>
            <person name="Scherer S.E."/>
            <person name="Li P.W."/>
            <person name="Hoskins R.A."/>
            <person name="Galle R.F."/>
            <person name="George R.A."/>
            <person name="Lewis S.E."/>
            <person name="Richards S."/>
            <person name="Ashburner M."/>
            <person name="Henderson S.N."/>
            <person name="Sutton G.G."/>
            <person name="Wortman J.R."/>
            <person name="Yandell M.D."/>
            <person name="Zhang Q."/>
            <person name="Chen L.X."/>
            <person name="Brandon R.C."/>
            <person name="Rogers Y.-H.C."/>
            <person name="Blazej R.G."/>
            <person name="Champe M."/>
            <person name="Pfeiffer B.D."/>
            <person name="Wan K.H."/>
            <person name="Doyle C."/>
            <person name="Baxter E.G."/>
            <person name="Helt G."/>
            <person name="Nelson C.R."/>
            <person name="Miklos G.L.G."/>
            <person name="Abril J.F."/>
            <person name="Agbayani A."/>
            <person name="An H.-J."/>
            <person name="Andrews-Pfannkoch C."/>
            <person name="Baldwin D."/>
            <person name="Ballew R.M."/>
            <person name="Basu A."/>
            <person name="Baxendale J."/>
            <person name="Bayraktaroglu L."/>
            <person name="Beasley E.M."/>
            <person name="Beeson K.Y."/>
            <person name="Benos P.V."/>
            <person name="Berman B.P."/>
            <person name="Bhandari D."/>
            <person name="Bolshakov S."/>
            <person name="Borkova D."/>
            <person name="Botchan M.R."/>
            <person name="Bouck J."/>
            <person name="Brokstein P."/>
            <person name="Brottier P."/>
            <person name="Burtis K.C."/>
            <person name="Busam D.A."/>
            <person name="Butler H."/>
            <person name="Cadieu E."/>
            <person name="Center A."/>
            <person name="Chandra I."/>
            <person name="Cherry J.M."/>
            <person name="Cawley S."/>
            <person name="Dahlke C."/>
            <person name="Davenport L.B."/>
            <person name="Davies P."/>
            <person name="de Pablos B."/>
            <person name="Delcher A."/>
            <person name="Deng Z."/>
            <person name="Mays A.D."/>
            <person name="Dew I."/>
            <person name="Dietz S.M."/>
            <person name="Dodson K."/>
            <person name="Doup L.E."/>
            <person name="Downes M."/>
            <person name="Dugan-Rocha S."/>
            <person name="Dunkov B.C."/>
            <person name="Dunn P."/>
            <person name="Durbin K.J."/>
            <person name="Evangelista C.C."/>
            <person name="Ferraz C."/>
            <person name="Ferriera S."/>
            <person name="Fleischmann W."/>
            <person name="Fosler C."/>
            <person name="Gabrielian A.E."/>
            <person name="Garg N.S."/>
            <person name="Gelbart W.M."/>
            <person name="Glasser K."/>
            <person name="Glodek A."/>
            <person name="Gong F."/>
            <person name="Gorrell J.H."/>
            <person name="Gu Z."/>
            <person name="Guan P."/>
            <person name="Harris M."/>
            <person name="Harris N.L."/>
            <person name="Harvey D.A."/>
            <person name="Heiman T.J."/>
            <person name="Hernandez J.R."/>
            <person name="Houck J."/>
            <person name="Hostin D."/>
            <person name="Houston K.A."/>
            <person name="Howland T.J."/>
            <person name="Wei M.-H."/>
            <person name="Ibegwam C."/>
            <person name="Jalali M."/>
            <person name="Kalush F."/>
            <person name="Karpen G.H."/>
            <person name="Ke Z."/>
            <person name="Kennison J.A."/>
            <person name="Ketchum K.A."/>
            <person name="Kimmel B.E."/>
            <person name="Kodira C.D."/>
            <person name="Kraft C.L."/>
            <person name="Kravitz S."/>
            <person name="Kulp D."/>
            <person name="Lai Z."/>
            <person name="Lasko P."/>
            <person name="Lei Y."/>
            <person name="Levitsky A.A."/>
            <person name="Li J.H."/>
            <person name="Li Z."/>
            <person name="Liang Y."/>
            <person name="Lin X."/>
            <person name="Liu X."/>
            <person name="Mattei B."/>
            <person name="McIntosh T.C."/>
            <person name="McLeod M.P."/>
            <person name="McPherson D."/>
            <person name="Merkulov G."/>
            <person name="Milshina N.V."/>
            <person name="Mobarry C."/>
            <person name="Morris J."/>
            <person name="Moshrefi A."/>
            <person name="Mount S.M."/>
            <person name="Moy M."/>
            <person name="Murphy B."/>
            <person name="Murphy L."/>
            <person name="Muzny D.M."/>
            <person name="Nelson D.L."/>
            <person name="Nelson D.R."/>
            <person name="Nelson K.A."/>
            <person name="Nixon K."/>
            <person name="Nusskern D.R."/>
            <person name="Pacleb J.M."/>
            <person name="Palazzolo M."/>
            <person name="Pittman G.S."/>
            <person name="Pan S."/>
            <person name="Pollard J."/>
            <person name="Puri V."/>
            <person name="Reese M.G."/>
            <person name="Reinert K."/>
            <person name="Remington K."/>
            <person name="Saunders R.D.C."/>
            <person name="Scheeler F."/>
            <person name="Shen H."/>
            <person name="Shue B.C."/>
            <person name="Siden-Kiamos I."/>
            <person name="Simpson M."/>
            <person name="Skupski M.P."/>
            <person name="Smith T.J."/>
            <person name="Spier E."/>
            <person name="Spradling A.C."/>
            <person name="Stapleton M."/>
            <person name="Strong R."/>
            <person name="Sun E."/>
            <person name="Svirskas R."/>
            <person name="Tector C."/>
            <person name="Turner R."/>
            <person name="Venter E."/>
            <person name="Wang A.H."/>
            <person name="Wang X."/>
            <person name="Wang Z.-Y."/>
            <person name="Wassarman D.A."/>
            <person name="Weinstock G.M."/>
            <person name="Weissenbach J."/>
            <person name="Williams S.M."/>
            <person name="Woodage T."/>
            <person name="Worley K.C."/>
            <person name="Wu D."/>
            <person name="Yang S."/>
            <person name="Yao Q.A."/>
            <person name="Ye J."/>
            <person name="Yeh R.-F."/>
            <person name="Zaveri J.S."/>
            <person name="Zhan M."/>
            <person name="Zhang G."/>
            <person name="Zhao Q."/>
            <person name="Zheng L."/>
            <person name="Zheng X.H."/>
            <person name="Zhong F.N."/>
            <person name="Zhong W."/>
            <person name="Zhou X."/>
            <person name="Zhu S.C."/>
            <person name="Zhu X."/>
            <person name="Smith H.O."/>
            <person name="Gibbs R.A."/>
            <person name="Myers E.W."/>
            <person name="Rubin G.M."/>
            <person name="Venter J.C."/>
        </authorList>
    </citation>
    <scope>NUCLEOTIDE SEQUENCE [LARGE SCALE GENOMIC DNA]</scope>
    <source>
        <strain evidence="13">Berkeley</strain>
    </source>
</reference>
<reference evidence="13" key="2">
    <citation type="journal article" date="2002" name="Genome Biol.">
        <title>Annotation of the Drosophila melanogaster euchromatic genome: a systematic review.</title>
        <authorList>
            <person name="Misra S."/>
            <person name="Crosby M.A."/>
            <person name="Mungall C.J."/>
            <person name="Matthews B.B."/>
            <person name="Campbell K.S."/>
            <person name="Hradecky P."/>
            <person name="Huang Y."/>
            <person name="Kaminker J.S."/>
            <person name="Millburn G.H."/>
            <person name="Prochnik S.E."/>
            <person name="Smith C.D."/>
            <person name="Tupy J.L."/>
            <person name="Whitfield E.J."/>
            <person name="Bayraktaroglu L."/>
            <person name="Berman B.P."/>
            <person name="Bettencourt B.R."/>
            <person name="Celniker S.E."/>
            <person name="de Grey A.D.N.J."/>
            <person name="Drysdale R.A."/>
            <person name="Harris N.L."/>
            <person name="Richter J."/>
            <person name="Russo S."/>
            <person name="Schroeder A.J."/>
            <person name="Shu S.Q."/>
            <person name="Stapleton M."/>
            <person name="Yamada C."/>
            <person name="Ashburner M."/>
            <person name="Gelbart W.M."/>
            <person name="Rubin G.M."/>
            <person name="Lewis S.E."/>
        </authorList>
    </citation>
    <scope>GENOME REANNOTATION</scope>
    <source>
        <strain evidence="13">Berkeley</strain>
    </source>
</reference>
<reference evidence="10" key="3">
    <citation type="submission" date="2009-11" db="EMBL/GenBank/DDBJ databases">
        <authorList>
            <person name="Carlson J."/>
            <person name="Booth B."/>
            <person name="Frise E."/>
            <person name="Park S."/>
            <person name="Wan K."/>
            <person name="Yu C."/>
            <person name="Celniker S."/>
        </authorList>
    </citation>
    <scope>NUCLEOTIDE SEQUENCE [LARGE SCALE MRNA]</scope>
    <source>
        <strain evidence="10">Berkeley</strain>
        <tissue evidence="9">Embryo</tissue>
        <tissue evidence="10 11">Testis</tissue>
    </source>
</reference>
<reference evidence="8" key="4">
    <citation type="journal article" date="2016" name="Elife">
        <title>MiniCORVET is a Vps8-containing early endosomal tether in Drosophila.</title>
        <authorList>
            <person name="Lorincz P."/>
            <person name="Lakatos Z."/>
            <person name="Varga A."/>
            <person name="Maruzs T."/>
            <person name="Simon-Vecsei Z."/>
            <person name="Darula Z."/>
            <person name="Benko P."/>
            <person name="Csordas G."/>
            <person name="Lippai M."/>
            <person name="Ando I."/>
            <person name="Hegedus K."/>
            <person name="Medzihradszky K.F."/>
            <person name="Takats S."/>
            <person name="Juhasz G."/>
        </authorList>
    </citation>
    <scope>FUNCTION</scope>
    <scope>IDENTIFICATION IN THE CORVET COMPLEX</scope>
    <scope>SUBCELLULAR LOCATION</scope>
    <scope>DISRUPTION PHENOTYPE</scope>
    <scope>IDENTIFICATION BY MASS SPECTROMETRY</scope>
</reference>
<reference key="5">
    <citation type="journal article" date="2019" name="Elife">
        <title>Vps8 overexpression inhibits HOPS-dependent trafficking routes by outcompeting Vps41/Lt.</title>
        <authorList>
            <person name="Lorincz P."/>
            <person name="Kenez L.A."/>
            <person name="Toth S."/>
            <person name="Kiss V."/>
            <person name="Varga A."/>
            <person name="Csizmadia T."/>
            <person name="Simon-Vecsei Z."/>
            <person name="Juhasz G."/>
        </authorList>
    </citation>
    <scope>FUNCTION</scope>
    <scope>SUBUNIT</scope>
</reference>
<comment type="function">
    <text evidence="5 6">Part of the class C core vacuole/endosome tethering (CORVET) complex involved in endo-lysosomal vesicle trafficking and lysosome biogenesis by facilitating docking and fusion of endosomal vesicles (PubMed:27253064, PubMed:31194677). The CORVET complex acts upstream of the homotypic fusion and vacuole protein sorting (HOPS) tethering complex but is not involved in autophagic flux (PubMed:27253064, PubMed:31194677). The CORVET complex may cooperate with the early endosomal tether Rbsn-5 to mediate endosomal fusion (PubMed:27253064). As part of the CORVET complex recruited to endosomes by activated GTP-bound Rab5 (PubMed:27253064). Specifically required for endocytic trafficking in a subset of cells, such as hemocytes and nephrocytes, which are highly active in endocytosis (PubMed:27253064).</text>
</comment>
<comment type="subunit">
    <text evidence="5 6 7">Component of the class C core vacuole/endosome tethering (CORVET) complex composed of at least Vps8, dor/Vps18, car/Vps33A and Vps16A; unlike in other species, Vps11 is not part of the Drosophila complex (PubMed:27253064). Due to the reduced number of components the Drosophila CORVET complex is often referred to as the miniCORVET complex (PubMed:27253064). Has a higher affinity than the homotypic fusion and vacuole protein sorting (HOPS) tethering complex-specific component lt/Vps41 for Vps16A, car/Vps33A and dor/Vps18, the core components shared by both tethering complexes (PubMed:31194677).</text>
</comment>
<comment type="interaction">
    <interactant intactId="EBI-192483">
        <id>Q9VRX2</id>
    </interactant>
    <interactant intactId="EBI-421908">
        <id>Q24314</id>
        <label>dor</label>
    </interactant>
    <organismsDiffer>false</organismsDiffer>
    <experiments>5</experiments>
</comment>
<comment type="subcellular location">
    <subcellularLocation>
        <location evidence="5">Early endosome</location>
    </subcellularLocation>
    <text evidence="5">Localization to the early endosome is dependent on Rab5 and class C core vacuole/endosome tethering (CORVET) complex subunits dor/Vps18, car/Vps33A and Vps16A.</text>
</comment>
<comment type="developmental stage">
    <text evidence="5">Expressed in the larva, in the pupal wings and the adult fly (at protein level). High levels of expression are found in larval hemocytes and Garland nephrocytes (at protein level).</text>
</comment>
<comment type="disruption phenotype">
    <text evidence="5">Semilethal: animals can complete metamorphosis, but most of them die as pharate adults unable to emerge from the pupal case; surviving flies are weak, fail to unfold their wings properly and die within 24 hr. The eye color is similar to wild type flies. In larvae, results in the development of hemocyte-derived melanotic tumors in body cavities, accumulation of crystal cells and lamellocytes and disorganization of the sessile hemocyte compartment which might be connected to the abnormal increase of circulating hemocytes. In Garland cells, uptake from the hemolymph, endosome formation and endo-lysosomal trafficking are defective and result in enlarged cells; late endosomes and endolysosomes are fragmented and erroneously distributed in the cytoplasm instead of being found in a layer directly beneath peripheral early endosomes. In hemocytes, acidification of endocytic vacuoles containing bacteria is defective. In wing imaginal disks, there are no endosome defects.</text>
</comment>
<comment type="similarity">
    <text evidence="8">Belongs to the VPS8 family.</text>
</comment>
<comment type="sequence caution" evidence="8">
    <conflict type="frameshift">
        <sequence resource="EMBL-CDS" id="ACK77654"/>
    </conflict>
</comment>
<comment type="sequence caution" evidence="8">
    <conflict type="miscellaneous discrepancy">
        <sequence resource="EMBL-CDS" id="ACY40032"/>
    </conflict>
    <text>Aberrant splicing at the N-terminus.</text>
</comment>
<dbReference type="EMBL" id="AE014296">
    <property type="protein sequence ID" value="AAF50660.1"/>
    <property type="molecule type" value="Genomic_DNA"/>
</dbReference>
<dbReference type="EMBL" id="BT053736">
    <property type="protein sequence ID" value="ACK77654.1"/>
    <property type="status" value="ALT_FRAME"/>
    <property type="molecule type" value="mRNA"/>
</dbReference>
<dbReference type="EMBL" id="BT088834">
    <property type="protein sequence ID" value="ACS54286.1"/>
    <property type="molecule type" value="mRNA"/>
</dbReference>
<dbReference type="EMBL" id="BT100198">
    <property type="protein sequence ID" value="ACY40032.1"/>
    <property type="status" value="ALT_SEQ"/>
    <property type="molecule type" value="mRNA"/>
</dbReference>
<dbReference type="RefSeq" id="NP_648048.1">
    <property type="nucleotide sequence ID" value="NM_139791.3"/>
</dbReference>
<dbReference type="ComplexPortal" id="CPX-8877">
    <property type="entry name" value="CORVET tethering complex"/>
</dbReference>
<dbReference type="FunCoup" id="Q9VRX2">
    <property type="interactions" value="1836"/>
</dbReference>
<dbReference type="IntAct" id="Q9VRX2">
    <property type="interactions" value="40"/>
</dbReference>
<dbReference type="STRING" id="7227.FBpp0076695"/>
<dbReference type="GlyGen" id="Q9VRX2">
    <property type="glycosylation" value="1 site"/>
</dbReference>
<dbReference type="PaxDb" id="7227-FBpp0076695"/>
<dbReference type="EnsemblMetazoa" id="FBtr0076986">
    <property type="protein sequence ID" value="FBpp0076695"/>
    <property type="gene ID" value="FBgn0035704"/>
</dbReference>
<dbReference type="GeneID" id="38735"/>
<dbReference type="KEGG" id="dme:Dmel_CG10144"/>
<dbReference type="UCSC" id="CG10144-RA">
    <property type="organism name" value="d. melanogaster"/>
</dbReference>
<dbReference type="AGR" id="FB:FBgn0035704"/>
<dbReference type="CTD" id="23355"/>
<dbReference type="FlyBase" id="FBgn0035704">
    <property type="gene designation" value="Vps8"/>
</dbReference>
<dbReference type="VEuPathDB" id="VectorBase:FBgn0035704"/>
<dbReference type="eggNOG" id="KOG2079">
    <property type="taxonomic scope" value="Eukaryota"/>
</dbReference>
<dbReference type="GeneTree" id="ENSGT00390000010672"/>
<dbReference type="HOGENOM" id="CLU_000917_1_2_1"/>
<dbReference type="InParanoid" id="Q9VRX2"/>
<dbReference type="OMA" id="NQLFFHQ"/>
<dbReference type="OrthoDB" id="289913at2759"/>
<dbReference type="PhylomeDB" id="Q9VRX2"/>
<dbReference type="BioGRID-ORCS" id="38735">
    <property type="hits" value="0 hits in 1 CRISPR screen"/>
</dbReference>
<dbReference type="GenomeRNAi" id="38735"/>
<dbReference type="PRO" id="PR:Q9VRX2"/>
<dbReference type="Proteomes" id="UP000000803">
    <property type="component" value="Chromosome 3L"/>
</dbReference>
<dbReference type="Bgee" id="FBgn0035704">
    <property type="expression patterns" value="Expressed in germline cell (Drosophila) in post-embryonic organism and 66 other cell types or tissues"/>
</dbReference>
<dbReference type="GO" id="GO:0033263">
    <property type="term" value="C:CORVET complex"/>
    <property type="evidence" value="ECO:0000314"/>
    <property type="project" value="UniProtKB"/>
</dbReference>
<dbReference type="GO" id="GO:0005769">
    <property type="term" value="C:early endosome"/>
    <property type="evidence" value="ECO:0000314"/>
    <property type="project" value="UniProtKB"/>
</dbReference>
<dbReference type="GO" id="GO:0030897">
    <property type="term" value="C:HOPS complex"/>
    <property type="evidence" value="ECO:0000318"/>
    <property type="project" value="GO_Central"/>
</dbReference>
<dbReference type="GO" id="GO:0005770">
    <property type="term" value="C:late endosome"/>
    <property type="evidence" value="ECO:0000318"/>
    <property type="project" value="GO_Central"/>
</dbReference>
<dbReference type="GO" id="GO:0051020">
    <property type="term" value="F:GTPase binding"/>
    <property type="evidence" value="ECO:0000250"/>
    <property type="project" value="FlyBase"/>
</dbReference>
<dbReference type="GO" id="GO:0008270">
    <property type="term" value="F:zinc ion binding"/>
    <property type="evidence" value="ECO:0000255"/>
    <property type="project" value="FlyBase"/>
</dbReference>
<dbReference type="GO" id="GO:0006897">
    <property type="term" value="P:endocytosis"/>
    <property type="evidence" value="ECO:0000315"/>
    <property type="project" value="UniProtKB"/>
</dbReference>
<dbReference type="GO" id="GO:0016197">
    <property type="term" value="P:endosomal transport"/>
    <property type="evidence" value="ECO:0000250"/>
    <property type="project" value="FlyBase"/>
</dbReference>
<dbReference type="GO" id="GO:0034058">
    <property type="term" value="P:endosomal vesicle fusion"/>
    <property type="evidence" value="ECO:0000314"/>
    <property type="project" value="UniProtKB"/>
</dbReference>
<dbReference type="GO" id="GO:0007032">
    <property type="term" value="P:endosome organization"/>
    <property type="evidence" value="ECO:0000314"/>
    <property type="project" value="UniProtKB"/>
</dbReference>
<dbReference type="GO" id="GO:0006623">
    <property type="term" value="P:protein targeting to vacuole"/>
    <property type="evidence" value="ECO:0000318"/>
    <property type="project" value="GO_Central"/>
</dbReference>
<dbReference type="FunFam" id="2.130.10.10:FF:002294">
    <property type="entry name" value="CG10144"/>
    <property type="match status" value="1"/>
</dbReference>
<dbReference type="Gene3D" id="2.130.10.10">
    <property type="entry name" value="YVTN repeat-like/Quinoprotein amine dehydrogenase"/>
    <property type="match status" value="1"/>
</dbReference>
<dbReference type="Gene3D" id="3.30.40.10">
    <property type="entry name" value="Zinc/RING finger domain, C3HC4 (zinc finger)"/>
    <property type="match status" value="1"/>
</dbReference>
<dbReference type="InterPro" id="IPR000547">
    <property type="entry name" value="Clathrin_H-chain/VPS_repeat"/>
</dbReference>
<dbReference type="InterPro" id="IPR011047">
    <property type="entry name" value="Quinoprotein_ADH-like_sf"/>
</dbReference>
<dbReference type="InterPro" id="IPR045111">
    <property type="entry name" value="Vps41/Vps8"/>
</dbReference>
<dbReference type="InterPro" id="IPR025941">
    <property type="entry name" value="Vps8_central_dom"/>
</dbReference>
<dbReference type="InterPro" id="IPR015943">
    <property type="entry name" value="WD40/YVTN_repeat-like_dom_sf"/>
</dbReference>
<dbReference type="InterPro" id="IPR001841">
    <property type="entry name" value="Znf_RING"/>
</dbReference>
<dbReference type="InterPro" id="IPR013083">
    <property type="entry name" value="Znf_RING/FYVE/PHD"/>
</dbReference>
<dbReference type="PANTHER" id="PTHR12616">
    <property type="entry name" value="VACUOLAR PROTEIN SORTING VPS41"/>
    <property type="match status" value="1"/>
</dbReference>
<dbReference type="PANTHER" id="PTHR12616:SF8">
    <property type="entry name" value="VACUOLAR PROTEIN SORTING-ASSOCIATED PROTEIN 8 HOMOLOG"/>
    <property type="match status" value="1"/>
</dbReference>
<dbReference type="Pfam" id="PF23410">
    <property type="entry name" value="Beta-prop_VPS8"/>
    <property type="match status" value="1"/>
</dbReference>
<dbReference type="Pfam" id="PF12816">
    <property type="entry name" value="TPR_Vps8"/>
    <property type="match status" value="1"/>
</dbReference>
<dbReference type="SUPFAM" id="SSF50998">
    <property type="entry name" value="Quinoprotein alcohol dehydrogenase-like"/>
    <property type="match status" value="1"/>
</dbReference>
<dbReference type="SUPFAM" id="SSF57850">
    <property type="entry name" value="RING/U-box"/>
    <property type="match status" value="1"/>
</dbReference>
<dbReference type="PROSITE" id="PS50236">
    <property type="entry name" value="CHCR"/>
    <property type="match status" value="1"/>
</dbReference>
<dbReference type="PROSITE" id="PS50089">
    <property type="entry name" value="ZF_RING_2"/>
    <property type="match status" value="1"/>
</dbReference>
<name>VPS8_DROME</name>
<keyword id="KW-0967">Endosome</keyword>
<keyword id="KW-0479">Metal-binding</keyword>
<keyword id="KW-0653">Protein transport</keyword>
<keyword id="KW-1185">Reference proteome</keyword>
<keyword id="KW-0813">Transport</keyword>
<keyword id="KW-0862">Zinc</keyword>
<keyword id="KW-0863">Zinc-finger</keyword>
<accession>Q9VRX2</accession>
<accession>B7FNP6</accession>
<accession>C5WLL9</accession>
<accession>D0IQG0</accession>
<proteinExistence type="evidence at protein level"/>